<feature type="chain" id="PRO_0000067619" description="Urease accessory protein UreD">
    <location>
        <begin position="1"/>
        <end position="287"/>
    </location>
</feature>
<keyword id="KW-0143">Chaperone</keyword>
<keyword id="KW-0963">Cytoplasm</keyword>
<keyword id="KW-0996">Nickel insertion</keyword>
<evidence type="ECO:0000255" key="1">
    <source>
        <dbReference type="HAMAP-Rule" id="MF_01384"/>
    </source>
</evidence>
<sequence length="287" mass="33160">MILSKEKINNYAAYLYIKVAYDEAHNKMAHTVYFTNFYRSSKPLFLDEEDPINPCFQTISMGGGYVSGEVYRSDFEVEANARCIITTQSSAKAYKAVDGKTSEQHTNITLGKNSILEYISDNVIVYEDGKFAQFNNFKMDSTATLIYTECFGPGWSPHGSAYQYEKMYLNTKIYYDNKLVLFDNLKFQPRKNDESAFGIMDGYHYCGTMIVINQEVVEEDVIKIRDLVKEKYPDMDMIFGVSRMDIPGLGLRVLANTYYHVEKINAVAHDYFRRKLFNKKPLILRKP</sequence>
<protein>
    <recommendedName>
        <fullName evidence="1">Urease accessory protein UreD</fullName>
    </recommendedName>
</protein>
<accession>P0CB03</accession>
<accession>Q56563</accession>
<reference key="1">
    <citation type="journal article" date="1996" name="J. Bacteriol.">
        <title>Organization of Ureaplasma urealyticum urease gene cluster and expression in a suppressor strain of Escherichia coli.</title>
        <authorList>
            <person name="Neyrolles O."/>
            <person name="Ferris S."/>
            <person name="Behbahani N."/>
            <person name="Montagnier L."/>
            <person name="Blanchard A."/>
        </authorList>
    </citation>
    <scope>NUCLEOTIDE SEQUENCE [GENOMIC DNA]</scope>
    <source>
        <strain>ATCC 27618 / CIP 103755 / NCTC 10177 / T960 / Serovar 8</strain>
    </source>
</reference>
<reference key="2">
    <citation type="journal article" date="2004" name="Int. J. Syst. Evol. Microbiol.">
        <title>Postgenomic taxonomy of human ureaplasmas - a case study based on multiple gene sequences.</title>
        <authorList>
            <person name="Kong F."/>
            <person name="Gilbert G.L."/>
        </authorList>
    </citation>
    <scope>NUCLEOTIDE SEQUENCE [GENOMIC DNA]</scope>
    <source>
        <strain>ATCC 27618 / CIP 103755 / NCTC 10177 / T960 / Serovar 8</strain>
        <strain>ATCC 27814 / 23 / Serovar 2</strain>
        <strain>ATCC 27816 / 58 / Serovar 4</strain>
        <strain>ATCC 27817 / 354 / Serovar 5</strain>
        <strain>ATCC 27819 / Co / Serovar 7</strain>
        <strain>ATCC 33175 / Vancouver / Serovar 9</strain>
        <strain>ATCC 33695 / K2 / Serovar 11</strain>
        <strain>ATCC 33696 / U24 / Serovar 12</strain>
        <strain>ATCC 33698 / U38 / Serovar 13</strain>
    </source>
</reference>
<dbReference type="EMBL" id="L40490">
    <property type="protein sequence ID" value="AAA89194.1"/>
    <property type="molecule type" value="Genomic_DNA"/>
</dbReference>
<dbReference type="EMBL" id="AF085720">
    <property type="protein sequence ID" value="AAG10306.1"/>
    <property type="molecule type" value="Genomic_DNA"/>
</dbReference>
<dbReference type="EMBL" id="AF085721">
    <property type="protein sequence ID" value="AAG10311.1"/>
    <property type="molecule type" value="Genomic_DNA"/>
</dbReference>
<dbReference type="EMBL" id="AF085722">
    <property type="protein sequence ID" value="AAG10316.1"/>
    <property type="molecule type" value="Genomic_DNA"/>
</dbReference>
<dbReference type="EMBL" id="AF085723">
    <property type="protein sequence ID" value="AAG10321.1"/>
    <property type="molecule type" value="Genomic_DNA"/>
</dbReference>
<dbReference type="EMBL" id="AF085724">
    <property type="protein sequence ID" value="AAG10326.1"/>
    <property type="molecule type" value="Genomic_DNA"/>
</dbReference>
<dbReference type="EMBL" id="AF085725">
    <property type="protein sequence ID" value="AAG10331.1"/>
    <property type="molecule type" value="Genomic_DNA"/>
</dbReference>
<dbReference type="EMBL" id="AF085727">
    <property type="protein sequence ID" value="AAG10341.1"/>
    <property type="molecule type" value="Genomic_DNA"/>
</dbReference>
<dbReference type="EMBL" id="AF085728">
    <property type="protein sequence ID" value="AAG10346.1"/>
    <property type="molecule type" value="Genomic_DNA"/>
</dbReference>
<dbReference type="EMBL" id="AF085729">
    <property type="protein sequence ID" value="AAG10351.1"/>
    <property type="molecule type" value="Genomic_DNA"/>
</dbReference>
<dbReference type="RefSeq" id="WP_004025994.1">
    <property type="nucleotide sequence ID" value="NZ_QOKT01000007.1"/>
</dbReference>
<dbReference type="SMR" id="P0CB03"/>
<dbReference type="OMA" id="CQHIIVH"/>
<dbReference type="GO" id="GO:0005737">
    <property type="term" value="C:cytoplasm"/>
    <property type="evidence" value="ECO:0007669"/>
    <property type="project" value="UniProtKB-SubCell"/>
</dbReference>
<dbReference type="GO" id="GO:0016151">
    <property type="term" value="F:nickel cation binding"/>
    <property type="evidence" value="ECO:0007669"/>
    <property type="project" value="UniProtKB-UniRule"/>
</dbReference>
<dbReference type="HAMAP" id="MF_01384">
    <property type="entry name" value="UreD"/>
    <property type="match status" value="1"/>
</dbReference>
<dbReference type="InterPro" id="IPR002669">
    <property type="entry name" value="UreD"/>
</dbReference>
<dbReference type="PANTHER" id="PTHR33643">
    <property type="entry name" value="UREASE ACCESSORY PROTEIN D"/>
    <property type="match status" value="1"/>
</dbReference>
<dbReference type="PANTHER" id="PTHR33643:SF1">
    <property type="entry name" value="UREASE ACCESSORY PROTEIN D"/>
    <property type="match status" value="1"/>
</dbReference>
<dbReference type="Pfam" id="PF01774">
    <property type="entry name" value="UreD"/>
    <property type="match status" value="1"/>
</dbReference>
<gene>
    <name evidence="1" type="primary">ureD</name>
</gene>
<comment type="function">
    <text evidence="1">Required for maturation of urease via the functional incorporation of the urease nickel metallocenter.</text>
</comment>
<comment type="subunit">
    <text evidence="1">UreD, UreF and UreG form a complex that acts as a GTP-hydrolysis-dependent molecular chaperone, activating the urease apoprotein by helping to assemble the nickel containing metallocenter of UreC. The UreE protein probably delivers the nickel.</text>
</comment>
<comment type="subcellular location">
    <subcellularLocation>
        <location evidence="1">Cytoplasm</location>
    </subcellularLocation>
</comment>
<comment type="similarity">
    <text evidence="1">Belongs to the UreD family.</text>
</comment>
<name>URED_UREUR</name>
<proteinExistence type="inferred from homology"/>
<organism>
    <name type="scientific">Ureaplasma urealyticum</name>
    <name type="common">Ureaplasma urealyticum biotype 2</name>
    <dbReference type="NCBI Taxonomy" id="2130"/>
    <lineage>
        <taxon>Bacteria</taxon>
        <taxon>Bacillati</taxon>
        <taxon>Mycoplasmatota</taxon>
        <taxon>Mycoplasmoidales</taxon>
        <taxon>Mycoplasmoidaceae</taxon>
        <taxon>Ureaplasma</taxon>
    </lineage>
</organism>